<organism>
    <name type="scientific">Xenopus laevis</name>
    <name type="common">African clawed frog</name>
    <dbReference type="NCBI Taxonomy" id="8355"/>
    <lineage>
        <taxon>Eukaryota</taxon>
        <taxon>Metazoa</taxon>
        <taxon>Chordata</taxon>
        <taxon>Craniata</taxon>
        <taxon>Vertebrata</taxon>
        <taxon>Euteleostomi</taxon>
        <taxon>Amphibia</taxon>
        <taxon>Batrachia</taxon>
        <taxon>Anura</taxon>
        <taxon>Pipoidea</taxon>
        <taxon>Pipidae</taxon>
        <taxon>Xenopodinae</taxon>
        <taxon>Xenopus</taxon>
        <taxon>Xenopus</taxon>
    </lineage>
</organism>
<accession>Q6NRK1</accession>
<proteinExistence type="evidence at protein level"/>
<comment type="function">
    <text evidence="2 3 6">Belongs to an adhesion system, which plays a role in the organization of homotypic, interneuronal and heterotypic cell-cell adherens junctions (AJs). Involved in cell movement (By similarity). Acts as a centrosome maturation factor, probably by maintaining the integrity of the pericentriolar material and proper microtubule nucleation at mitotic spindle poles. The function seems to implicate at least in part WRAP73; the SSX2IP:WRAP73 complex is proposed to act as regulator of spindle anchoring at the mitotic centrosome.</text>
</comment>
<comment type="subunit">
    <text evidence="8">Interacts with WRAP73.</text>
</comment>
<comment type="subcellular location">
    <subcellularLocation>
        <location evidence="1">Cell junction</location>
        <location evidence="1">Adherens junction</location>
    </subcellularLocation>
    <subcellularLocation>
        <location evidence="6">Cytoplasm</location>
        <location evidence="6">Cytoskeleton</location>
        <location evidence="6">Microtubule organizing center</location>
        <location evidence="6">Centrosome</location>
        <location evidence="6">Centriolar satellite</location>
    </subcellularLocation>
</comment>
<comment type="developmental stage">
    <text evidence="6">Expressed at M-phase onset and accumulates at microtubule minus ends.</text>
</comment>
<comment type="similarity">
    <text evidence="7">Belongs to the ADIP family.</text>
</comment>
<name>ADIPA_XENLA</name>
<sequence length="554" mass="64680">MGDRRTISLPESDKILQYCSEIRMSPTSLLPSPSHSVANNLSGSVYTFCTEDNLEQCITYIDQELRTIGFPTVQAVSKNGEGRKLHLVSIINCIYELLQRNSQTMRSNEEVETQLLKINGDLEYLQSIHQRQKDQLEATKRENCALQERDRQMQCKNRNLLQLLKNEKEEVQKLQNIIASRSTQYNHSVKRKEREYNKLKERLYQLVMDKRDKKISIDVLNYVGRADGKRSSWRTGKTDAKNEEEMYKVLLNDYEQRQKQLMVENVELKKVLQQMKKEMISIVSQRKTKEKLEDSTGTVTSDIEEEIADSSKENLSELSCEAVREQLISSIRQQWRILKSHMEKLDNQACLVNVPTPDENGLIARAEHEQELDKLISEIQQCKETIRSQQQLLKQQLSVPRDDDTSKLLQDCYLLEDKERLQEEWKLFNAQKKNFEKERRNFTEAAIRLGHEKKVFEEDRAAWLKHQFLNMTVFSDHKNLEERKVPGVHFSSEQDNCRLHSRPHDKVLASSGDYSRRPSKALPITSSSKHSLTQIESISWRDSSISPNDTDFLN</sequence>
<reference key="1">
    <citation type="submission" date="2004-05" db="EMBL/GenBank/DDBJ databases">
        <authorList>
            <consortium name="NIH - Xenopus Gene Collection (XGC) project"/>
        </authorList>
    </citation>
    <scope>NUCLEOTIDE SEQUENCE [LARGE SCALE MRNA]</scope>
    <source>
        <tissue>Oocyte</tissue>
    </source>
</reference>
<reference key="2">
    <citation type="journal article" date="2013" name="J. Cell Biol.">
        <title>The centriolar satellite protein SSX2IP promotes centrosome maturation.</title>
        <authorList>
            <person name="Barenz F."/>
            <person name="Inoue D."/>
            <person name="Yokoyama H."/>
            <person name="Tegha-Dunghu J."/>
            <person name="Freiss S."/>
            <person name="Draeger S."/>
            <person name="Mayilo D."/>
            <person name="Cado I."/>
            <person name="Merker S."/>
            <person name="Klinger M."/>
            <person name="Hoeckendorf B."/>
            <person name="Pilz S."/>
            <person name="Hupfeld K."/>
            <person name="Steinbeisser H."/>
            <person name="Lorenz H."/>
            <person name="Ruppert T."/>
            <person name="Wittbrodt J."/>
            <person name="Gruss O.J."/>
        </authorList>
    </citation>
    <scope>FUNCTION</scope>
    <scope>SUBCELLULAR LOCATION</scope>
    <scope>MICROTUBULE-BINDING</scope>
    <scope>DEVELOPMENTAL STAGE</scope>
</reference>
<reference key="3">
    <citation type="journal article" date="2015" name="Biochem. Biophys. Res. Commun.">
        <title>The conserved Wdr8-hMsd1/SSX2IP complex localises to the centrosome and ensures proper spindle length and orientation.</title>
        <authorList>
            <person name="Hori A."/>
            <person name="Morand A."/>
            <person name="Ikebe C."/>
            <person name="Frith D."/>
            <person name="Snijders A.P."/>
            <person name="Toda T."/>
        </authorList>
    </citation>
    <scope>INTERACTION WITH WRAP73</scope>
</reference>
<feature type="chain" id="PRO_0000425547" description="Afadin- and alpha-actinin-binding protein A">
    <location>
        <begin position="1"/>
        <end position="554"/>
    </location>
</feature>
<feature type="region of interest" description="Disordered" evidence="5">
    <location>
        <begin position="508"/>
        <end position="528"/>
    </location>
</feature>
<feature type="coiled-coil region" evidence="4">
    <location>
        <begin position="122"/>
        <end position="287"/>
    </location>
</feature>
<feature type="coiled-coil region" evidence="4">
    <location>
        <begin position="359"/>
        <end position="449"/>
    </location>
</feature>
<dbReference type="EMBL" id="BC070749">
    <property type="protein sequence ID" value="AAH70749.1"/>
    <property type="molecule type" value="mRNA"/>
</dbReference>
<dbReference type="RefSeq" id="NP_001084793.1">
    <property type="nucleotide sequence ID" value="NM_001091324.1"/>
</dbReference>
<dbReference type="SMR" id="Q6NRK1"/>
<dbReference type="DNASU" id="431833"/>
<dbReference type="GeneID" id="431833"/>
<dbReference type="KEGG" id="xla:431833"/>
<dbReference type="AGR" id="Xenbase:XB-GENE-6077817"/>
<dbReference type="CTD" id="431833"/>
<dbReference type="Xenbase" id="XB-GENE-6077817">
    <property type="gene designation" value="ssx2ip.S"/>
</dbReference>
<dbReference type="OrthoDB" id="312015at2759"/>
<dbReference type="Proteomes" id="UP000186698">
    <property type="component" value="Chromosome 4S"/>
</dbReference>
<dbReference type="Bgee" id="431833">
    <property type="expression patterns" value="Expressed in egg cell and 16 other cell types or tissues"/>
</dbReference>
<dbReference type="GO" id="GO:0005912">
    <property type="term" value="C:adherens junction"/>
    <property type="evidence" value="ECO:0007669"/>
    <property type="project" value="UniProtKB-SubCell"/>
</dbReference>
<dbReference type="GO" id="GO:0034451">
    <property type="term" value="C:centriolar satellite"/>
    <property type="evidence" value="ECO:0000314"/>
    <property type="project" value="UniProtKB"/>
</dbReference>
<dbReference type="GO" id="GO:0036064">
    <property type="term" value="C:ciliary basal body"/>
    <property type="evidence" value="ECO:0000318"/>
    <property type="project" value="GO_Central"/>
</dbReference>
<dbReference type="GO" id="GO:0005737">
    <property type="term" value="C:cytoplasm"/>
    <property type="evidence" value="ECO:0007669"/>
    <property type="project" value="UniProtKB-KW"/>
</dbReference>
<dbReference type="GO" id="GO:0005874">
    <property type="term" value="C:microtubule"/>
    <property type="evidence" value="ECO:0007669"/>
    <property type="project" value="UniProtKB-KW"/>
</dbReference>
<dbReference type="GO" id="GO:0051011">
    <property type="term" value="F:microtubule minus-end binding"/>
    <property type="evidence" value="ECO:0000314"/>
    <property type="project" value="UniProtKB"/>
</dbReference>
<dbReference type="GO" id="GO:0007155">
    <property type="term" value="P:cell adhesion"/>
    <property type="evidence" value="ECO:0007669"/>
    <property type="project" value="UniProtKB-KW"/>
</dbReference>
<dbReference type="GO" id="GO:0007098">
    <property type="term" value="P:centrosome cycle"/>
    <property type="evidence" value="ECO:0000315"/>
    <property type="project" value="UniProtKB"/>
</dbReference>
<dbReference type="GO" id="GO:0035735">
    <property type="term" value="P:intraciliary transport involved in cilium assembly"/>
    <property type="evidence" value="ECO:0000318"/>
    <property type="project" value="GO_Central"/>
</dbReference>
<dbReference type="InterPro" id="IPR052300">
    <property type="entry name" value="Adhesion_Centrosome_assoc"/>
</dbReference>
<dbReference type="InterPro" id="IPR021622">
    <property type="entry name" value="Afadin/alpha-actinin-bd"/>
</dbReference>
<dbReference type="PANTHER" id="PTHR46507">
    <property type="entry name" value="AFADIN- AND ALPHA-ACTININ-BINDING PROTEIN"/>
    <property type="match status" value="1"/>
</dbReference>
<dbReference type="PANTHER" id="PTHR46507:SF7">
    <property type="entry name" value="AFADIN- AND ALPHA-ACTININ-BINDING PROTEIN A"/>
    <property type="match status" value="1"/>
</dbReference>
<dbReference type="Pfam" id="PF11559">
    <property type="entry name" value="ADIP"/>
    <property type="match status" value="1"/>
</dbReference>
<evidence type="ECO:0000250" key="1"/>
<evidence type="ECO:0000250" key="2">
    <source>
        <dbReference type="UniProtKB" id="Q8VC66"/>
    </source>
</evidence>
<evidence type="ECO:0000250" key="3">
    <source>
        <dbReference type="UniProtKB" id="Q9Y2D8"/>
    </source>
</evidence>
<evidence type="ECO:0000255" key="4"/>
<evidence type="ECO:0000256" key="5">
    <source>
        <dbReference type="SAM" id="MobiDB-lite"/>
    </source>
</evidence>
<evidence type="ECO:0000269" key="6">
    <source>
    </source>
</evidence>
<evidence type="ECO:0000305" key="7"/>
<evidence type="ECO:0000305" key="8">
    <source>
    </source>
</evidence>
<keyword id="KW-0130">Cell adhesion</keyword>
<keyword id="KW-0965">Cell junction</keyword>
<keyword id="KW-0175">Coiled coil</keyword>
<keyword id="KW-0963">Cytoplasm</keyword>
<keyword id="KW-0206">Cytoskeleton</keyword>
<keyword id="KW-0493">Microtubule</keyword>
<keyword id="KW-1185">Reference proteome</keyword>
<gene>
    <name type="primary">ssx2ip-a</name>
    <name type="synonym">ssx2ip</name>
</gene>
<protein>
    <recommendedName>
        <fullName>Afadin- and alpha-actinin-binding protein A</fullName>
        <shortName>ADIP-A</shortName>
    </recommendedName>
    <alternativeName>
        <fullName>Afadin DIL domain-interacting protein A</fullName>
    </alternativeName>
    <alternativeName>
        <fullName>SSX2-interacting protein A</fullName>
        <shortName>XSSX2IP</shortName>
    </alternativeName>
</protein>